<proteinExistence type="inferred from homology"/>
<reference key="1">
    <citation type="journal article" date="2010" name="Genome Biol. Evol.">
        <title>Continuing evolution of Burkholderia mallei through genome reduction and large-scale rearrangements.</title>
        <authorList>
            <person name="Losada L."/>
            <person name="Ronning C.M."/>
            <person name="DeShazer D."/>
            <person name="Woods D."/>
            <person name="Fedorova N."/>
            <person name="Kim H.S."/>
            <person name="Shabalina S.A."/>
            <person name="Pearson T.R."/>
            <person name="Brinkac L."/>
            <person name="Tan P."/>
            <person name="Nandi T."/>
            <person name="Crabtree J."/>
            <person name="Badger J."/>
            <person name="Beckstrom-Sternberg S."/>
            <person name="Saqib M."/>
            <person name="Schutzer S.E."/>
            <person name="Keim P."/>
            <person name="Nierman W.C."/>
        </authorList>
    </citation>
    <scope>NUCLEOTIDE SEQUENCE [LARGE SCALE GENOMIC DNA]</scope>
    <source>
        <strain>668</strain>
    </source>
</reference>
<accession>A3NA49</accession>
<feature type="chain" id="PRO_1000011584" description="GTPase Der">
    <location>
        <begin position="1"/>
        <end position="445"/>
    </location>
</feature>
<feature type="domain" description="EngA-type G 1">
    <location>
        <begin position="3"/>
        <end position="167"/>
    </location>
</feature>
<feature type="domain" description="EngA-type G 2">
    <location>
        <begin position="180"/>
        <end position="353"/>
    </location>
</feature>
<feature type="domain" description="KH-like" evidence="1">
    <location>
        <begin position="354"/>
        <end position="438"/>
    </location>
</feature>
<feature type="binding site" evidence="1">
    <location>
        <begin position="9"/>
        <end position="16"/>
    </location>
    <ligand>
        <name>GTP</name>
        <dbReference type="ChEBI" id="CHEBI:37565"/>
        <label>1</label>
    </ligand>
</feature>
<feature type="binding site" evidence="1">
    <location>
        <begin position="56"/>
        <end position="60"/>
    </location>
    <ligand>
        <name>GTP</name>
        <dbReference type="ChEBI" id="CHEBI:37565"/>
        <label>1</label>
    </ligand>
</feature>
<feature type="binding site" evidence="1">
    <location>
        <begin position="119"/>
        <end position="122"/>
    </location>
    <ligand>
        <name>GTP</name>
        <dbReference type="ChEBI" id="CHEBI:37565"/>
        <label>1</label>
    </ligand>
</feature>
<feature type="binding site" evidence="1">
    <location>
        <begin position="186"/>
        <end position="193"/>
    </location>
    <ligand>
        <name>GTP</name>
        <dbReference type="ChEBI" id="CHEBI:37565"/>
        <label>2</label>
    </ligand>
</feature>
<feature type="binding site" evidence="1">
    <location>
        <begin position="233"/>
        <end position="237"/>
    </location>
    <ligand>
        <name>GTP</name>
        <dbReference type="ChEBI" id="CHEBI:37565"/>
        <label>2</label>
    </ligand>
</feature>
<feature type="binding site" evidence="1">
    <location>
        <begin position="298"/>
        <end position="301"/>
    </location>
    <ligand>
        <name>GTP</name>
        <dbReference type="ChEBI" id="CHEBI:37565"/>
        <label>2</label>
    </ligand>
</feature>
<keyword id="KW-0342">GTP-binding</keyword>
<keyword id="KW-0547">Nucleotide-binding</keyword>
<keyword id="KW-0677">Repeat</keyword>
<keyword id="KW-0690">Ribosome biogenesis</keyword>
<gene>
    <name evidence="1" type="primary">der</name>
    <name type="synonym">engA</name>
    <name type="ordered locus">BURPS668_2185</name>
</gene>
<protein>
    <recommendedName>
        <fullName evidence="1">GTPase Der</fullName>
    </recommendedName>
    <alternativeName>
        <fullName evidence="1">GTP-binding protein EngA</fullName>
    </alternativeName>
</protein>
<comment type="function">
    <text evidence="1">GTPase that plays an essential role in the late steps of ribosome biogenesis.</text>
</comment>
<comment type="subunit">
    <text evidence="1">Associates with the 50S ribosomal subunit.</text>
</comment>
<comment type="similarity">
    <text evidence="1">Belongs to the TRAFAC class TrmE-Era-EngA-EngB-Septin-like GTPase superfamily. EngA (Der) GTPase family.</text>
</comment>
<evidence type="ECO:0000255" key="1">
    <source>
        <dbReference type="HAMAP-Rule" id="MF_00195"/>
    </source>
</evidence>
<dbReference type="EMBL" id="CP000570">
    <property type="protein sequence ID" value="ABN82511.1"/>
    <property type="molecule type" value="Genomic_DNA"/>
</dbReference>
<dbReference type="RefSeq" id="WP_004192452.1">
    <property type="nucleotide sequence ID" value="NC_009074.1"/>
</dbReference>
<dbReference type="SMR" id="A3NA49"/>
<dbReference type="GeneID" id="93060472"/>
<dbReference type="KEGG" id="bpd:BURPS668_2185"/>
<dbReference type="HOGENOM" id="CLU_016077_6_2_4"/>
<dbReference type="GO" id="GO:0016887">
    <property type="term" value="F:ATP hydrolysis activity"/>
    <property type="evidence" value="ECO:0007669"/>
    <property type="project" value="InterPro"/>
</dbReference>
<dbReference type="GO" id="GO:0005525">
    <property type="term" value="F:GTP binding"/>
    <property type="evidence" value="ECO:0007669"/>
    <property type="project" value="UniProtKB-UniRule"/>
</dbReference>
<dbReference type="GO" id="GO:0043022">
    <property type="term" value="F:ribosome binding"/>
    <property type="evidence" value="ECO:0007669"/>
    <property type="project" value="TreeGrafter"/>
</dbReference>
<dbReference type="GO" id="GO:0042254">
    <property type="term" value="P:ribosome biogenesis"/>
    <property type="evidence" value="ECO:0007669"/>
    <property type="project" value="UniProtKB-KW"/>
</dbReference>
<dbReference type="CDD" id="cd01894">
    <property type="entry name" value="EngA1"/>
    <property type="match status" value="1"/>
</dbReference>
<dbReference type="CDD" id="cd01895">
    <property type="entry name" value="EngA2"/>
    <property type="match status" value="1"/>
</dbReference>
<dbReference type="FunFam" id="3.30.300.20:FF:000004">
    <property type="entry name" value="GTPase Der"/>
    <property type="match status" value="1"/>
</dbReference>
<dbReference type="FunFam" id="3.40.50.300:FF:000040">
    <property type="entry name" value="GTPase Der"/>
    <property type="match status" value="1"/>
</dbReference>
<dbReference type="FunFam" id="3.40.50.300:FF:000057">
    <property type="entry name" value="GTPase Der"/>
    <property type="match status" value="1"/>
</dbReference>
<dbReference type="Gene3D" id="3.30.300.20">
    <property type="match status" value="1"/>
</dbReference>
<dbReference type="Gene3D" id="3.40.50.300">
    <property type="entry name" value="P-loop containing nucleotide triphosphate hydrolases"/>
    <property type="match status" value="2"/>
</dbReference>
<dbReference type="HAMAP" id="MF_00195">
    <property type="entry name" value="GTPase_Der"/>
    <property type="match status" value="1"/>
</dbReference>
<dbReference type="InterPro" id="IPR003593">
    <property type="entry name" value="AAA+_ATPase"/>
</dbReference>
<dbReference type="InterPro" id="IPR031166">
    <property type="entry name" value="G_ENGA"/>
</dbReference>
<dbReference type="InterPro" id="IPR006073">
    <property type="entry name" value="GTP-bd"/>
</dbReference>
<dbReference type="InterPro" id="IPR016484">
    <property type="entry name" value="GTPase_Der"/>
</dbReference>
<dbReference type="InterPro" id="IPR032859">
    <property type="entry name" value="KH_dom-like"/>
</dbReference>
<dbReference type="InterPro" id="IPR015946">
    <property type="entry name" value="KH_dom-like_a/b"/>
</dbReference>
<dbReference type="InterPro" id="IPR027417">
    <property type="entry name" value="P-loop_NTPase"/>
</dbReference>
<dbReference type="InterPro" id="IPR005225">
    <property type="entry name" value="Small_GTP-bd"/>
</dbReference>
<dbReference type="NCBIfam" id="TIGR03594">
    <property type="entry name" value="GTPase_EngA"/>
    <property type="match status" value="1"/>
</dbReference>
<dbReference type="NCBIfam" id="TIGR00231">
    <property type="entry name" value="small_GTP"/>
    <property type="match status" value="2"/>
</dbReference>
<dbReference type="PANTHER" id="PTHR43834">
    <property type="entry name" value="GTPASE DER"/>
    <property type="match status" value="1"/>
</dbReference>
<dbReference type="PANTHER" id="PTHR43834:SF6">
    <property type="entry name" value="GTPASE DER"/>
    <property type="match status" value="1"/>
</dbReference>
<dbReference type="Pfam" id="PF14714">
    <property type="entry name" value="KH_dom-like"/>
    <property type="match status" value="1"/>
</dbReference>
<dbReference type="Pfam" id="PF01926">
    <property type="entry name" value="MMR_HSR1"/>
    <property type="match status" value="2"/>
</dbReference>
<dbReference type="PIRSF" id="PIRSF006485">
    <property type="entry name" value="GTP-binding_EngA"/>
    <property type="match status" value="1"/>
</dbReference>
<dbReference type="PRINTS" id="PR00326">
    <property type="entry name" value="GTP1OBG"/>
</dbReference>
<dbReference type="SMART" id="SM00382">
    <property type="entry name" value="AAA"/>
    <property type="match status" value="2"/>
</dbReference>
<dbReference type="SUPFAM" id="SSF52540">
    <property type="entry name" value="P-loop containing nucleoside triphosphate hydrolases"/>
    <property type="match status" value="2"/>
</dbReference>
<dbReference type="PROSITE" id="PS51712">
    <property type="entry name" value="G_ENGA"/>
    <property type="match status" value="2"/>
</dbReference>
<name>DER_BURP6</name>
<organism>
    <name type="scientific">Burkholderia pseudomallei (strain 668)</name>
    <dbReference type="NCBI Taxonomy" id="320373"/>
    <lineage>
        <taxon>Bacteria</taxon>
        <taxon>Pseudomonadati</taxon>
        <taxon>Pseudomonadota</taxon>
        <taxon>Betaproteobacteria</taxon>
        <taxon>Burkholderiales</taxon>
        <taxon>Burkholderiaceae</taxon>
        <taxon>Burkholderia</taxon>
        <taxon>pseudomallei group</taxon>
    </lineage>
</organism>
<sequence length="445" mass="49077">MKPVIALVGRPNVGKSTLFNRLTRSRDALVADLPGLTRDRHYGEGRVGARPYLVVDTGGFEPVAKDGILHEMARQTRQAVEEADVVVFIVDGRNGLAPQDKSIADYLRKTGRPIFLVVNKAEGMKYTAVASDFYELGLGDPRAISAAHGDGVNDMINEALEVAYAGEPQESEEAAAARGIKIAIVGRPNVGKSTLVNTLIGEDRVIAFDMPGTTRDSIYVDFERNGKHYTLIDTAGLRRRGKVFEAIEKFSVVKTLQSISDANVVILLLDARQDISDQDAHIAGFVVEQGRALVVGVNKWDGLDPHVRERTKADLARKLKFLEFAKFHFISAAEKTGIGALMRSVDDAYAAAMKKLPTPKLTRALIEAVEFQQPRRRGPVRPKLRYAHQGGQNPPIIVIHGNALDAVTETYKRYLENRFRETFSLTGTPLRIEFRSSTNPYADKD</sequence>